<feature type="chain" id="PRO_0000291556" description="Small ribosomal subunit protein eS6">
    <location>
        <begin position="1"/>
        <end position="248"/>
    </location>
</feature>
<feature type="region of interest" description="Disordered" evidence="2">
    <location>
        <begin position="213"/>
        <end position="248"/>
    </location>
</feature>
<feature type="compositionally biased region" description="Basic and acidic residues" evidence="2">
    <location>
        <begin position="223"/>
        <end position="248"/>
    </location>
</feature>
<proteinExistence type="evidence at transcript level"/>
<reference key="1">
    <citation type="journal article" date="2006" name="Insect Mol. Biol.">
        <title>Analysis of fat body transcriptome from the adult tsetse fly, Glossina morsitans morsitans.</title>
        <authorList>
            <person name="Attardo G.M."/>
            <person name="Strickler-Dinglasan P."/>
            <person name="Perkin S.A.H."/>
            <person name="Caler E."/>
            <person name="Bonaldo M.F."/>
            <person name="Soares M.B."/>
            <person name="El-Sayeed N.M.A."/>
            <person name="Aksoy S."/>
        </authorList>
    </citation>
    <scope>NUCLEOTIDE SEQUENCE [LARGE SCALE MRNA]</scope>
    <source>
        <tissue>Fat body</tissue>
    </source>
</reference>
<evidence type="ECO:0000250" key="1">
    <source>
        <dbReference type="UniProtKB" id="P62753"/>
    </source>
</evidence>
<evidence type="ECO:0000256" key="2">
    <source>
        <dbReference type="SAM" id="MobiDB-lite"/>
    </source>
</evidence>
<evidence type="ECO:0000305" key="3"/>
<accession>Q2PQM1</accession>
<keyword id="KW-0963">Cytoplasm</keyword>
<keyword id="KW-0539">Nucleus</keyword>
<keyword id="KW-0597">Phosphoprotein</keyword>
<keyword id="KW-0687">Ribonucleoprotein</keyword>
<keyword id="KW-0689">Ribosomal protein</keyword>
<protein>
    <recommendedName>
        <fullName evidence="3">Small ribosomal subunit protein eS6</fullName>
    </recommendedName>
    <alternativeName>
        <fullName>40S ribosomal protein S6</fullName>
    </alternativeName>
</protein>
<gene>
    <name type="primary">RpS6</name>
</gene>
<comment type="function">
    <text evidence="1">Component of the 40S small ribosomal subunit. Plays an important role in controlling cell growth and proliferation through the selective translation of particular classes of mRNA. Part of the small subunit (SSU) processome, first precursor of the small eukaryotic ribosomal subunit. During the assembly of the SSU processome in the nucleolus, many ribosome biogenesis factors, an RNA chaperone and ribosomal proteins associate with the nascent pre-rRNA and work in concert to generate RNA folding, modifications, rearrangements and cleavage as well as targeted degradation of pre-ribosomal RNA by the RNA exosome.</text>
</comment>
<comment type="subunit">
    <text evidence="1">Component of the small ribosomal subunit. Part of the small subunit (SSU) processome, composed of more than 70 proteins and the RNA chaperone small nucleolar RNA (snoRNA) U3.</text>
</comment>
<comment type="subcellular location">
    <subcellularLocation>
        <location evidence="1">Cytoplasm</location>
    </subcellularLocation>
    <subcellularLocation>
        <location evidence="1">Nucleus</location>
        <location evidence="1">Nucleolus</location>
    </subcellularLocation>
</comment>
<comment type="PTM">
    <text evidence="1">Ribosomal protein S6 is the major substrate of protein kinases in eukaryote ribosomes.</text>
</comment>
<comment type="similarity">
    <text evidence="3">Belongs to the eukaryotic ribosomal protein eS6 family.</text>
</comment>
<dbReference type="EMBL" id="DQ307202">
    <property type="protein sequence ID" value="ABC25102.1"/>
    <property type="molecule type" value="mRNA"/>
</dbReference>
<dbReference type="SMR" id="Q2PQM1"/>
<dbReference type="STRING" id="37546.Q2PQM1"/>
<dbReference type="EnsemblMetazoa" id="GMOY011766-RA">
    <property type="protein sequence ID" value="GMOY011766-PA"/>
    <property type="gene ID" value="GMOY011766"/>
</dbReference>
<dbReference type="VEuPathDB" id="VectorBase:GMOY011766"/>
<dbReference type="PhylomeDB" id="Q2PQM1"/>
<dbReference type="Proteomes" id="UP000092444">
    <property type="component" value="Unassembled WGS sequence"/>
</dbReference>
<dbReference type="GO" id="GO:0005737">
    <property type="term" value="C:cytoplasm"/>
    <property type="evidence" value="ECO:0007669"/>
    <property type="project" value="UniProtKB-SubCell"/>
</dbReference>
<dbReference type="GO" id="GO:0005730">
    <property type="term" value="C:nucleolus"/>
    <property type="evidence" value="ECO:0007669"/>
    <property type="project" value="UniProtKB-SubCell"/>
</dbReference>
<dbReference type="GO" id="GO:0005840">
    <property type="term" value="C:ribosome"/>
    <property type="evidence" value="ECO:0007669"/>
    <property type="project" value="UniProtKB-KW"/>
</dbReference>
<dbReference type="GO" id="GO:0032040">
    <property type="term" value="C:small-subunit processome"/>
    <property type="evidence" value="ECO:0000250"/>
    <property type="project" value="UniProtKB"/>
</dbReference>
<dbReference type="GO" id="GO:0003735">
    <property type="term" value="F:structural constituent of ribosome"/>
    <property type="evidence" value="ECO:0007669"/>
    <property type="project" value="InterPro"/>
</dbReference>
<dbReference type="GO" id="GO:0042274">
    <property type="term" value="P:ribosomal small subunit biogenesis"/>
    <property type="evidence" value="ECO:0000250"/>
    <property type="project" value="UniProtKB"/>
</dbReference>
<dbReference type="GO" id="GO:0006412">
    <property type="term" value="P:translation"/>
    <property type="evidence" value="ECO:0007669"/>
    <property type="project" value="InterPro"/>
</dbReference>
<dbReference type="FunFam" id="1.20.5.2650:FF:000001">
    <property type="entry name" value="40S ribosomal protein S6"/>
    <property type="match status" value="1"/>
</dbReference>
<dbReference type="Gene3D" id="1.20.5.2650">
    <property type="match status" value="1"/>
</dbReference>
<dbReference type="InterPro" id="IPR001377">
    <property type="entry name" value="Ribosomal_eS6"/>
</dbReference>
<dbReference type="InterPro" id="IPR014401">
    <property type="entry name" value="Ribosomal_eS6-like"/>
</dbReference>
<dbReference type="InterPro" id="IPR018282">
    <property type="entry name" value="Ribosomal_eS6_CS"/>
</dbReference>
<dbReference type="PANTHER" id="PTHR11502">
    <property type="entry name" value="40S RIBOSOMAL PROTEIN S6"/>
    <property type="match status" value="1"/>
</dbReference>
<dbReference type="Pfam" id="PF01092">
    <property type="entry name" value="Ribosomal_S6e"/>
    <property type="match status" value="1"/>
</dbReference>
<dbReference type="PIRSF" id="PIRSF002129">
    <property type="entry name" value="Ribosom_S6_euk"/>
    <property type="match status" value="1"/>
</dbReference>
<dbReference type="SMART" id="SM01405">
    <property type="entry name" value="Ribosomal_S6e"/>
    <property type="match status" value="1"/>
</dbReference>
<dbReference type="PROSITE" id="PS00578">
    <property type="entry name" value="RIBOSOMAL_S6E"/>
    <property type="match status" value="1"/>
</dbReference>
<organism>
    <name type="scientific">Glossina morsitans morsitans</name>
    <name type="common">Savannah tsetse fly</name>
    <dbReference type="NCBI Taxonomy" id="37546"/>
    <lineage>
        <taxon>Eukaryota</taxon>
        <taxon>Metazoa</taxon>
        <taxon>Ecdysozoa</taxon>
        <taxon>Arthropoda</taxon>
        <taxon>Hexapoda</taxon>
        <taxon>Insecta</taxon>
        <taxon>Pterygota</taxon>
        <taxon>Neoptera</taxon>
        <taxon>Endopterygota</taxon>
        <taxon>Diptera</taxon>
        <taxon>Brachycera</taxon>
        <taxon>Muscomorpha</taxon>
        <taxon>Hippoboscoidea</taxon>
        <taxon>Glossinidae</taxon>
        <taxon>Glossina</taxon>
    </lineage>
</organism>
<name>RS6_GLOMM</name>
<sequence length="248" mass="28370">MKLNVSYPATGCQKLFEVNDEHKLRVFYEKHMGQVVEADILGDEWKGYMLRISGGNDKQGFPMKQGVLTHDRVRLLLKKGHSCYRPRRTGERKRKSVRGCIVDANMSVLALVIVKKGEKDIPGLTDTSVPRRLGPKRASKIRKLYNLSKVDDVRPYVIRRPLPAKDNKKAISKAPKIQRLITPVVLQRKRRRIALKKKRQAASKEAAADYAKLLAQRKKESKAKREEAKRRRSASMRESKSSISSDKK</sequence>